<keyword id="KW-0131">Cell cycle</keyword>
<keyword id="KW-0132">Cell division</keyword>
<keyword id="KW-0143">Chaperone</keyword>
<keyword id="KW-0963">Cytoplasm</keyword>
<keyword id="KW-0413">Isomerase</keyword>
<keyword id="KW-0697">Rotamase</keyword>
<evidence type="ECO:0000255" key="1">
    <source>
        <dbReference type="HAMAP-Rule" id="MF_00303"/>
    </source>
</evidence>
<sequence>MATDLQVTTNKLSNKETQLTVKVPVEKIQNKVEGRIRQVAKTAKIDGFRKGNVPMSHIRSQYGAGIQQEVINDVIRDTVFEAIKSEDIRAVGMPNIDDVKLEDDFLVYQATVEIFPEVDVQGINEIEVERHTAKVDEADVDTMIENLQKQREEFVEKKGKADKGNQVTFDFEGSIDGEKFEGGSAEDFKLVIGSNQMIPGFEAGIKGMKAGEEKTIDVTFPEDYQAENLAGKEAQFKINVKLVEKSKLPEIDDAFLELFGVKEGGVEKLKDDVRKNMEREIKNAARSQVKQATFDALLEKNEFDVPNAMLEQEIERQRNMMMQRFSQQFGANADSFDKDMLPNELFEEQALRAARLGIIVARVIDTKGLEVDQARVETFIKEAAENYEDPSEVIEYYTTDKQQRANIESVVLEDQVVDYLIEQGKVTDKEVSYQDLLAAQQQQQQAM</sequence>
<dbReference type="EC" id="5.2.1.8" evidence="1"/>
<dbReference type="EMBL" id="CP000323">
    <property type="protein sequence ID" value="ABE76010.1"/>
    <property type="molecule type" value="Genomic_DNA"/>
</dbReference>
<dbReference type="RefSeq" id="WP_011514543.1">
    <property type="nucleotide sequence ID" value="NC_007969.1"/>
</dbReference>
<dbReference type="SMR" id="Q1Q8J3"/>
<dbReference type="STRING" id="335284.Pcryo_2233"/>
<dbReference type="KEGG" id="pcr:Pcryo_2233"/>
<dbReference type="eggNOG" id="COG0544">
    <property type="taxonomic scope" value="Bacteria"/>
</dbReference>
<dbReference type="HOGENOM" id="CLU_033058_2_0_6"/>
<dbReference type="Proteomes" id="UP000002425">
    <property type="component" value="Chromosome"/>
</dbReference>
<dbReference type="GO" id="GO:0005737">
    <property type="term" value="C:cytoplasm"/>
    <property type="evidence" value="ECO:0007669"/>
    <property type="project" value="UniProtKB-SubCell"/>
</dbReference>
<dbReference type="GO" id="GO:0003755">
    <property type="term" value="F:peptidyl-prolyl cis-trans isomerase activity"/>
    <property type="evidence" value="ECO:0007669"/>
    <property type="project" value="UniProtKB-UniRule"/>
</dbReference>
<dbReference type="GO" id="GO:0044183">
    <property type="term" value="F:protein folding chaperone"/>
    <property type="evidence" value="ECO:0007669"/>
    <property type="project" value="TreeGrafter"/>
</dbReference>
<dbReference type="GO" id="GO:0043022">
    <property type="term" value="F:ribosome binding"/>
    <property type="evidence" value="ECO:0007669"/>
    <property type="project" value="TreeGrafter"/>
</dbReference>
<dbReference type="GO" id="GO:0051083">
    <property type="term" value="P:'de novo' cotranslational protein folding"/>
    <property type="evidence" value="ECO:0007669"/>
    <property type="project" value="TreeGrafter"/>
</dbReference>
<dbReference type="GO" id="GO:0051301">
    <property type="term" value="P:cell division"/>
    <property type="evidence" value="ECO:0007669"/>
    <property type="project" value="UniProtKB-KW"/>
</dbReference>
<dbReference type="GO" id="GO:0061077">
    <property type="term" value="P:chaperone-mediated protein folding"/>
    <property type="evidence" value="ECO:0007669"/>
    <property type="project" value="TreeGrafter"/>
</dbReference>
<dbReference type="GO" id="GO:0015031">
    <property type="term" value="P:protein transport"/>
    <property type="evidence" value="ECO:0007669"/>
    <property type="project" value="UniProtKB-UniRule"/>
</dbReference>
<dbReference type="GO" id="GO:0043335">
    <property type="term" value="P:protein unfolding"/>
    <property type="evidence" value="ECO:0007669"/>
    <property type="project" value="TreeGrafter"/>
</dbReference>
<dbReference type="FunFam" id="3.10.50.40:FF:000001">
    <property type="entry name" value="Trigger factor"/>
    <property type="match status" value="1"/>
</dbReference>
<dbReference type="Gene3D" id="3.10.50.40">
    <property type="match status" value="1"/>
</dbReference>
<dbReference type="Gene3D" id="3.30.70.1050">
    <property type="entry name" value="Trigger factor ribosome-binding domain"/>
    <property type="match status" value="1"/>
</dbReference>
<dbReference type="Gene3D" id="1.10.3120.10">
    <property type="entry name" value="Trigger factor, C-terminal domain"/>
    <property type="match status" value="1"/>
</dbReference>
<dbReference type="HAMAP" id="MF_00303">
    <property type="entry name" value="Trigger_factor_Tig"/>
    <property type="match status" value="1"/>
</dbReference>
<dbReference type="InterPro" id="IPR046357">
    <property type="entry name" value="PPIase_dom_sf"/>
</dbReference>
<dbReference type="InterPro" id="IPR001179">
    <property type="entry name" value="PPIase_FKBP_dom"/>
</dbReference>
<dbReference type="InterPro" id="IPR005215">
    <property type="entry name" value="Trig_fac"/>
</dbReference>
<dbReference type="InterPro" id="IPR008880">
    <property type="entry name" value="Trigger_fac_C"/>
</dbReference>
<dbReference type="InterPro" id="IPR037041">
    <property type="entry name" value="Trigger_fac_C_sf"/>
</dbReference>
<dbReference type="InterPro" id="IPR008881">
    <property type="entry name" value="Trigger_fac_ribosome-bd_bac"/>
</dbReference>
<dbReference type="InterPro" id="IPR036611">
    <property type="entry name" value="Trigger_fac_ribosome-bd_sf"/>
</dbReference>
<dbReference type="InterPro" id="IPR027304">
    <property type="entry name" value="Trigger_fact/SurA_dom_sf"/>
</dbReference>
<dbReference type="NCBIfam" id="TIGR00115">
    <property type="entry name" value="tig"/>
    <property type="match status" value="1"/>
</dbReference>
<dbReference type="PANTHER" id="PTHR30560">
    <property type="entry name" value="TRIGGER FACTOR CHAPERONE AND PEPTIDYL-PROLYL CIS/TRANS ISOMERASE"/>
    <property type="match status" value="1"/>
</dbReference>
<dbReference type="PANTHER" id="PTHR30560:SF3">
    <property type="entry name" value="TRIGGER FACTOR-LIKE PROTEIN TIG, CHLOROPLASTIC"/>
    <property type="match status" value="1"/>
</dbReference>
<dbReference type="Pfam" id="PF00254">
    <property type="entry name" value="FKBP_C"/>
    <property type="match status" value="1"/>
</dbReference>
<dbReference type="Pfam" id="PF05698">
    <property type="entry name" value="Trigger_C"/>
    <property type="match status" value="1"/>
</dbReference>
<dbReference type="Pfam" id="PF05697">
    <property type="entry name" value="Trigger_N"/>
    <property type="match status" value="1"/>
</dbReference>
<dbReference type="PIRSF" id="PIRSF003095">
    <property type="entry name" value="Trigger_factor"/>
    <property type="match status" value="1"/>
</dbReference>
<dbReference type="SUPFAM" id="SSF54534">
    <property type="entry name" value="FKBP-like"/>
    <property type="match status" value="1"/>
</dbReference>
<dbReference type="SUPFAM" id="SSF109998">
    <property type="entry name" value="Triger factor/SurA peptide-binding domain-like"/>
    <property type="match status" value="1"/>
</dbReference>
<dbReference type="SUPFAM" id="SSF102735">
    <property type="entry name" value="Trigger factor ribosome-binding domain"/>
    <property type="match status" value="1"/>
</dbReference>
<dbReference type="PROSITE" id="PS50059">
    <property type="entry name" value="FKBP_PPIASE"/>
    <property type="match status" value="1"/>
</dbReference>
<feature type="chain" id="PRO_0000256597" description="Trigger factor">
    <location>
        <begin position="1"/>
        <end position="447"/>
    </location>
</feature>
<feature type="domain" description="PPIase FKBP-type" evidence="1">
    <location>
        <begin position="164"/>
        <end position="249"/>
    </location>
</feature>
<organism>
    <name type="scientific">Psychrobacter cryohalolentis (strain ATCC BAA-1226 / DSM 17306 / VKM B-2378 / K5)</name>
    <dbReference type="NCBI Taxonomy" id="335284"/>
    <lineage>
        <taxon>Bacteria</taxon>
        <taxon>Pseudomonadati</taxon>
        <taxon>Pseudomonadota</taxon>
        <taxon>Gammaproteobacteria</taxon>
        <taxon>Moraxellales</taxon>
        <taxon>Moraxellaceae</taxon>
        <taxon>Psychrobacter</taxon>
    </lineage>
</organism>
<protein>
    <recommendedName>
        <fullName evidence="1">Trigger factor</fullName>
        <shortName evidence="1">TF</shortName>
        <ecNumber evidence="1">5.2.1.8</ecNumber>
    </recommendedName>
    <alternativeName>
        <fullName evidence="1">PPIase</fullName>
    </alternativeName>
</protein>
<reference key="1">
    <citation type="submission" date="2006-03" db="EMBL/GenBank/DDBJ databases">
        <title>Complete sequence of chromosome of Psychrobacter cryohalolentis K5.</title>
        <authorList>
            <consortium name="US DOE Joint Genome Institute"/>
            <person name="Copeland A."/>
            <person name="Lucas S."/>
            <person name="Lapidus A."/>
            <person name="Barry K."/>
            <person name="Detter J.C."/>
            <person name="Glavina T."/>
            <person name="Hammon N."/>
            <person name="Israni S."/>
            <person name="Dalin E."/>
            <person name="Tice H."/>
            <person name="Pitluck S."/>
            <person name="Brettin T."/>
            <person name="Bruce D."/>
            <person name="Han C."/>
            <person name="Tapia R."/>
            <person name="Sims D.R."/>
            <person name="Gilna P."/>
            <person name="Schmutz J."/>
            <person name="Larimer F."/>
            <person name="Land M."/>
            <person name="Hauser L."/>
            <person name="Kyrpides N."/>
            <person name="Kim E."/>
            <person name="Richardson P."/>
        </authorList>
    </citation>
    <scope>NUCLEOTIDE SEQUENCE [LARGE SCALE GENOMIC DNA]</scope>
    <source>
        <strain>ATCC BAA-1226 / DSM 17306 / VKM B-2378 / K5</strain>
    </source>
</reference>
<proteinExistence type="inferred from homology"/>
<accession>Q1Q8J3</accession>
<name>TIG_PSYCK</name>
<comment type="function">
    <text evidence="1">Involved in protein export. Acts as a chaperone by maintaining the newly synthesized protein in an open conformation. Functions as a peptidyl-prolyl cis-trans isomerase.</text>
</comment>
<comment type="catalytic activity">
    <reaction evidence="1">
        <text>[protein]-peptidylproline (omega=180) = [protein]-peptidylproline (omega=0)</text>
        <dbReference type="Rhea" id="RHEA:16237"/>
        <dbReference type="Rhea" id="RHEA-COMP:10747"/>
        <dbReference type="Rhea" id="RHEA-COMP:10748"/>
        <dbReference type="ChEBI" id="CHEBI:83833"/>
        <dbReference type="ChEBI" id="CHEBI:83834"/>
        <dbReference type="EC" id="5.2.1.8"/>
    </reaction>
</comment>
<comment type="subcellular location">
    <subcellularLocation>
        <location>Cytoplasm</location>
    </subcellularLocation>
    <text evidence="1">About half TF is bound to the ribosome near the polypeptide exit tunnel while the other half is free in the cytoplasm.</text>
</comment>
<comment type="domain">
    <text evidence="1">Consists of 3 domains; the N-terminus binds the ribosome, the middle domain has PPIase activity, while the C-terminus has intrinsic chaperone activity on its own.</text>
</comment>
<comment type="similarity">
    <text evidence="1">Belongs to the FKBP-type PPIase family. Tig subfamily.</text>
</comment>
<gene>
    <name evidence="1" type="primary">tig</name>
    <name type="ordered locus">Pcryo_2233</name>
</gene>